<feature type="chain" id="PRO_0000325344" description="3-phosphoshikimate 1-carboxyvinyltransferase">
    <location>
        <begin position="1"/>
        <end position="426"/>
    </location>
</feature>
<feature type="active site" description="Proton acceptor" evidence="1">
    <location>
        <position position="312"/>
    </location>
</feature>
<feature type="binding site" evidence="1">
    <location>
        <position position="20"/>
    </location>
    <ligand>
        <name>3-phosphoshikimate</name>
        <dbReference type="ChEBI" id="CHEBI:145989"/>
    </ligand>
</feature>
<feature type="binding site" evidence="1">
    <location>
        <position position="20"/>
    </location>
    <ligand>
        <name>phosphoenolpyruvate</name>
        <dbReference type="ChEBI" id="CHEBI:58702"/>
    </ligand>
</feature>
<feature type="binding site" evidence="1">
    <location>
        <position position="21"/>
    </location>
    <ligand>
        <name>3-phosphoshikimate</name>
        <dbReference type="ChEBI" id="CHEBI:145989"/>
    </ligand>
</feature>
<feature type="binding site" evidence="1">
    <location>
        <position position="25"/>
    </location>
    <ligand>
        <name>3-phosphoshikimate</name>
        <dbReference type="ChEBI" id="CHEBI:145989"/>
    </ligand>
</feature>
<feature type="binding site" evidence="1">
    <location>
        <position position="92"/>
    </location>
    <ligand>
        <name>phosphoenolpyruvate</name>
        <dbReference type="ChEBI" id="CHEBI:58702"/>
    </ligand>
</feature>
<feature type="binding site" evidence="1">
    <location>
        <position position="120"/>
    </location>
    <ligand>
        <name>phosphoenolpyruvate</name>
        <dbReference type="ChEBI" id="CHEBI:58702"/>
    </ligand>
</feature>
<feature type="binding site" evidence="1">
    <location>
        <position position="166"/>
    </location>
    <ligand>
        <name>3-phosphoshikimate</name>
        <dbReference type="ChEBI" id="CHEBI:145989"/>
    </ligand>
</feature>
<feature type="binding site" evidence="1">
    <location>
        <position position="168"/>
    </location>
    <ligand>
        <name>3-phosphoshikimate</name>
        <dbReference type="ChEBI" id="CHEBI:145989"/>
    </ligand>
</feature>
<feature type="binding site" evidence="1">
    <location>
        <position position="168"/>
    </location>
    <ligand>
        <name>phosphoenolpyruvate</name>
        <dbReference type="ChEBI" id="CHEBI:58702"/>
    </ligand>
</feature>
<feature type="binding site" evidence="1">
    <location>
        <position position="312"/>
    </location>
    <ligand>
        <name>3-phosphoshikimate</name>
        <dbReference type="ChEBI" id="CHEBI:145989"/>
    </ligand>
</feature>
<feature type="binding site" evidence="1">
    <location>
        <position position="339"/>
    </location>
    <ligand>
        <name>3-phosphoshikimate</name>
        <dbReference type="ChEBI" id="CHEBI:145989"/>
    </ligand>
</feature>
<feature type="binding site" evidence="1">
    <location>
        <position position="343"/>
    </location>
    <ligand>
        <name>phosphoenolpyruvate</name>
        <dbReference type="ChEBI" id="CHEBI:58702"/>
    </ligand>
</feature>
<feature type="binding site" evidence="1">
    <location>
        <position position="385"/>
    </location>
    <ligand>
        <name>phosphoenolpyruvate</name>
        <dbReference type="ChEBI" id="CHEBI:58702"/>
    </ligand>
</feature>
<protein>
    <recommendedName>
        <fullName evidence="1">3-phosphoshikimate 1-carboxyvinyltransferase</fullName>
        <ecNumber evidence="1">2.5.1.19</ecNumber>
    </recommendedName>
    <alternativeName>
        <fullName evidence="1">5-enolpyruvylshikimate-3-phosphate synthase</fullName>
        <shortName evidence="1">EPSP synthase</shortName>
        <shortName evidence="1">EPSPS</shortName>
    </alternativeName>
</protein>
<keyword id="KW-0028">Amino-acid biosynthesis</keyword>
<keyword id="KW-0057">Aromatic amino acid biosynthesis</keyword>
<keyword id="KW-0963">Cytoplasm</keyword>
<keyword id="KW-1185">Reference proteome</keyword>
<keyword id="KW-0808">Transferase</keyword>
<gene>
    <name evidence="1" type="primary">aroA</name>
    <name type="ordered locus">EF_1566</name>
</gene>
<proteinExistence type="inferred from homology"/>
<name>AROA_ENTFA</name>
<dbReference type="EC" id="2.5.1.19" evidence="1"/>
<dbReference type="EMBL" id="AE016830">
    <property type="protein sequence ID" value="AAO81353.1"/>
    <property type="status" value="ALT_INIT"/>
    <property type="molecule type" value="Genomic_DNA"/>
</dbReference>
<dbReference type="RefSeq" id="NP_815283.1">
    <property type="nucleotide sequence ID" value="NC_004668.1"/>
</dbReference>
<dbReference type="SMR" id="P0DH70"/>
<dbReference type="STRING" id="226185.EF_1566"/>
<dbReference type="EnsemblBacteria" id="AAO81353">
    <property type="protein sequence ID" value="AAO81353"/>
    <property type="gene ID" value="EF_1566"/>
</dbReference>
<dbReference type="KEGG" id="efa:EF1566"/>
<dbReference type="PATRIC" id="fig|226185.45.peg.1939"/>
<dbReference type="eggNOG" id="COG0128">
    <property type="taxonomic scope" value="Bacteria"/>
</dbReference>
<dbReference type="HOGENOM" id="CLU_024321_0_1_9"/>
<dbReference type="UniPathway" id="UPA00053">
    <property type="reaction ID" value="UER00089"/>
</dbReference>
<dbReference type="Proteomes" id="UP000001415">
    <property type="component" value="Chromosome"/>
</dbReference>
<dbReference type="GO" id="GO:0005737">
    <property type="term" value="C:cytoplasm"/>
    <property type="evidence" value="ECO:0007669"/>
    <property type="project" value="UniProtKB-SubCell"/>
</dbReference>
<dbReference type="GO" id="GO:0003866">
    <property type="term" value="F:3-phosphoshikimate 1-carboxyvinyltransferase activity"/>
    <property type="evidence" value="ECO:0007669"/>
    <property type="project" value="UniProtKB-UniRule"/>
</dbReference>
<dbReference type="GO" id="GO:0008652">
    <property type="term" value="P:amino acid biosynthetic process"/>
    <property type="evidence" value="ECO:0007669"/>
    <property type="project" value="UniProtKB-KW"/>
</dbReference>
<dbReference type="GO" id="GO:0009073">
    <property type="term" value="P:aromatic amino acid family biosynthetic process"/>
    <property type="evidence" value="ECO:0007669"/>
    <property type="project" value="UniProtKB-KW"/>
</dbReference>
<dbReference type="GO" id="GO:0009423">
    <property type="term" value="P:chorismate biosynthetic process"/>
    <property type="evidence" value="ECO:0007669"/>
    <property type="project" value="UniProtKB-UniRule"/>
</dbReference>
<dbReference type="CDD" id="cd01556">
    <property type="entry name" value="EPSP_synthase"/>
    <property type="match status" value="1"/>
</dbReference>
<dbReference type="FunFam" id="3.65.10.10:FF:000005">
    <property type="entry name" value="3-phosphoshikimate 1-carboxyvinyltransferase"/>
    <property type="match status" value="1"/>
</dbReference>
<dbReference type="FunFam" id="3.65.10.10:FF:000006">
    <property type="entry name" value="3-phosphoshikimate 1-carboxyvinyltransferase"/>
    <property type="match status" value="1"/>
</dbReference>
<dbReference type="Gene3D" id="3.65.10.10">
    <property type="entry name" value="Enolpyruvate transferase domain"/>
    <property type="match status" value="2"/>
</dbReference>
<dbReference type="HAMAP" id="MF_00210">
    <property type="entry name" value="EPSP_synth"/>
    <property type="match status" value="1"/>
</dbReference>
<dbReference type="InterPro" id="IPR001986">
    <property type="entry name" value="Enolpyruvate_Tfrase_dom"/>
</dbReference>
<dbReference type="InterPro" id="IPR036968">
    <property type="entry name" value="Enolpyruvate_Tfrase_sf"/>
</dbReference>
<dbReference type="InterPro" id="IPR006264">
    <property type="entry name" value="EPSP_synthase"/>
</dbReference>
<dbReference type="InterPro" id="IPR023193">
    <property type="entry name" value="EPSP_synthase_CS"/>
</dbReference>
<dbReference type="InterPro" id="IPR013792">
    <property type="entry name" value="RNA3'P_cycl/enolpyr_Trfase_a/b"/>
</dbReference>
<dbReference type="NCBIfam" id="TIGR01356">
    <property type="entry name" value="aroA"/>
    <property type="match status" value="1"/>
</dbReference>
<dbReference type="PANTHER" id="PTHR21090">
    <property type="entry name" value="AROM/DEHYDROQUINATE SYNTHASE"/>
    <property type="match status" value="1"/>
</dbReference>
<dbReference type="PANTHER" id="PTHR21090:SF5">
    <property type="entry name" value="PENTAFUNCTIONAL AROM POLYPEPTIDE"/>
    <property type="match status" value="1"/>
</dbReference>
<dbReference type="Pfam" id="PF00275">
    <property type="entry name" value="EPSP_synthase"/>
    <property type="match status" value="1"/>
</dbReference>
<dbReference type="PIRSF" id="PIRSF000505">
    <property type="entry name" value="EPSPS"/>
    <property type="match status" value="1"/>
</dbReference>
<dbReference type="SUPFAM" id="SSF55205">
    <property type="entry name" value="EPT/RTPC-like"/>
    <property type="match status" value="1"/>
</dbReference>
<dbReference type="PROSITE" id="PS00104">
    <property type="entry name" value="EPSP_SYNTHASE_1"/>
    <property type="match status" value="1"/>
</dbReference>
<dbReference type="PROSITE" id="PS00885">
    <property type="entry name" value="EPSP_SYNTHASE_2"/>
    <property type="match status" value="1"/>
</dbReference>
<reference key="1">
    <citation type="journal article" date="2003" name="Science">
        <title>Role of mobile DNA in the evolution of vancomycin-resistant Enterococcus faecalis.</title>
        <authorList>
            <person name="Paulsen I.T."/>
            <person name="Banerjei L."/>
            <person name="Myers G.S.A."/>
            <person name="Nelson K.E."/>
            <person name="Seshadri R."/>
            <person name="Read T.D."/>
            <person name="Fouts D.E."/>
            <person name="Eisen J.A."/>
            <person name="Gill S.R."/>
            <person name="Heidelberg J.F."/>
            <person name="Tettelin H."/>
            <person name="Dodson R.J."/>
            <person name="Umayam L.A."/>
            <person name="Brinkac L.M."/>
            <person name="Beanan M.J."/>
            <person name="Daugherty S.C."/>
            <person name="DeBoy R.T."/>
            <person name="Durkin S.A."/>
            <person name="Kolonay J.F."/>
            <person name="Madupu R."/>
            <person name="Nelson W.C."/>
            <person name="Vamathevan J.J."/>
            <person name="Tran B."/>
            <person name="Upton J."/>
            <person name="Hansen T."/>
            <person name="Shetty J."/>
            <person name="Khouri H.M."/>
            <person name="Utterback T.R."/>
            <person name="Radune D."/>
            <person name="Ketchum K.A."/>
            <person name="Dougherty B.A."/>
            <person name="Fraser C.M."/>
        </authorList>
    </citation>
    <scope>NUCLEOTIDE SEQUENCE [LARGE SCALE GENOMIC DNA]</scope>
    <source>
        <strain>ATCC 700802 / V583</strain>
    </source>
</reference>
<sequence length="426" mass="45460">MQLRTNVKHLQGTLMVPSDKSISHRSIMFGAISSGKTTITNFLRGEDCLSTLAAFRSLGVNIEDDGTTITVEGRGFAGLKKAKNTIDVGNSGTTIRLMLGILAGCPFETRLAGDASIAKRPMNRVMLPLNQMGAECQGVQQTEFPPISIRGTQNLQPIDYTMPVASAQVKSAILFAALQAEGTSVVVEKEKTRDHTEEMIRQFGGTLEVDGKKIMLTGPQQLTGQNVVVPGDISSAAFFLVAGLVVPDSEILLKNVGLNQTRTGILDVIKNMGGSVTILNEDEANHSGDLLVKTSQLTATEIGGAIIPRLIDELPIIALLATQATGTTIIRDAEELKVKETNRIDAVAKELTILGADITPTDDGLIIHGPTSLHGGRVTSYGDHRIGMMLQIAALLVKEGTVELDKAEAVSVSYPAFFDDLERLSC</sequence>
<comment type="function">
    <text evidence="1">Catalyzes the transfer of the enolpyruvyl moiety of phosphoenolpyruvate (PEP) to the 5-hydroxyl of shikimate-3-phosphate (S3P) to produce enolpyruvyl shikimate-3-phosphate and inorganic phosphate.</text>
</comment>
<comment type="catalytic activity">
    <reaction evidence="1">
        <text>3-phosphoshikimate + phosphoenolpyruvate = 5-O-(1-carboxyvinyl)-3-phosphoshikimate + phosphate</text>
        <dbReference type="Rhea" id="RHEA:21256"/>
        <dbReference type="ChEBI" id="CHEBI:43474"/>
        <dbReference type="ChEBI" id="CHEBI:57701"/>
        <dbReference type="ChEBI" id="CHEBI:58702"/>
        <dbReference type="ChEBI" id="CHEBI:145989"/>
        <dbReference type="EC" id="2.5.1.19"/>
    </reaction>
    <physiologicalReaction direction="left-to-right" evidence="1">
        <dbReference type="Rhea" id="RHEA:21257"/>
    </physiologicalReaction>
</comment>
<comment type="pathway">
    <text evidence="1">Metabolic intermediate biosynthesis; chorismate biosynthesis; chorismate from D-erythrose 4-phosphate and phosphoenolpyruvate: step 6/7.</text>
</comment>
<comment type="subunit">
    <text evidence="1">Monomer.</text>
</comment>
<comment type="subcellular location">
    <subcellularLocation>
        <location evidence="1">Cytoplasm</location>
    </subcellularLocation>
</comment>
<comment type="similarity">
    <text evidence="1">Belongs to the EPSP synthase family.</text>
</comment>
<comment type="sequence caution" evidence="2">
    <conflict type="erroneous initiation">
        <sequence resource="EMBL-CDS" id="AAO81353"/>
    </conflict>
    <text>Extended N-terminus.</text>
</comment>
<evidence type="ECO:0000255" key="1">
    <source>
        <dbReference type="HAMAP-Rule" id="MF_00210"/>
    </source>
</evidence>
<evidence type="ECO:0000305" key="2"/>
<organism>
    <name type="scientific">Enterococcus faecalis (strain ATCC 700802 / V583)</name>
    <dbReference type="NCBI Taxonomy" id="226185"/>
    <lineage>
        <taxon>Bacteria</taxon>
        <taxon>Bacillati</taxon>
        <taxon>Bacillota</taxon>
        <taxon>Bacilli</taxon>
        <taxon>Lactobacillales</taxon>
        <taxon>Enterococcaceae</taxon>
        <taxon>Enterococcus</taxon>
    </lineage>
</organism>
<accession>P0DH70</accession>
<accession>Q7C3L6</accession>
<accession>Q9ANY6</accession>